<gene>
    <name type="primary">metQ</name>
    <name type="synonym">yaeC</name>
    <name type="ordered locus">b0197</name>
    <name type="ordered locus">JW0193</name>
</gene>
<name>METQ_ECOLI</name>
<accession>P28635</accession>
<protein>
    <recommendedName>
        <fullName>D-methionine-binding lipoprotein MetQ</fullName>
    </recommendedName>
</protein>
<comment type="function">
    <text evidence="2">This protein is a component of a D-methionine permease, a binding protein-dependent, ATP-driven transport system.</text>
</comment>
<comment type="interaction">
    <interactant intactId="EBI-1114713">
        <id>P28635</id>
    </interactant>
    <interactant intactId="EBI-559586">
        <id>P0AAF3</id>
        <label>araG</label>
    </interactant>
    <organismsDiffer>false</organismsDiffer>
    <experiments>3</experiments>
</comment>
<comment type="subcellular location">
    <subcellularLocation>
        <location evidence="3">Cell membrane</location>
        <topology evidence="3">Lipid-anchor</topology>
    </subcellularLocation>
</comment>
<comment type="miscellaneous">
    <text>The MetNIQ system is also to be able to transport the toxic methionine analog alpha-methyl-methionine.</text>
</comment>
<comment type="similarity">
    <text evidence="3">Belongs to the NlpA lipoprotein family.</text>
</comment>
<comment type="sequence caution" evidence="3">
    <conflict type="frameshift">
        <sequence resource="EMBL-CDS" id="AAA24507"/>
    </conflict>
</comment>
<feature type="signal peptide" evidence="1">
    <location>
        <begin position="1"/>
        <end position="22"/>
    </location>
</feature>
<feature type="chain" id="PRO_0000019739" description="D-methionine-binding lipoprotein MetQ">
    <location>
        <begin position="23"/>
        <end position="271"/>
    </location>
</feature>
<feature type="lipid moiety-binding region" description="N-palmitoyl cysteine" evidence="1">
    <location>
        <position position="23"/>
    </location>
</feature>
<feature type="lipid moiety-binding region" description="S-diacylglycerol cysteine" evidence="1">
    <location>
        <position position="23"/>
    </location>
</feature>
<feature type="sequence conflict" description="In Ref. 6; AAA24507." evidence="3" ref="6">
    <original>V</original>
    <variation>L</variation>
    <location>
        <position position="200"/>
    </location>
</feature>
<feature type="strand" evidence="4">
    <location>
        <begin position="32"/>
        <end position="38"/>
    </location>
</feature>
<feature type="helix" evidence="4">
    <location>
        <begin position="41"/>
        <end position="57"/>
    </location>
</feature>
<feature type="strand" evidence="4">
    <location>
        <begin position="60"/>
        <end position="70"/>
    </location>
</feature>
<feature type="helix" evidence="4">
    <location>
        <begin position="71"/>
        <end position="77"/>
    </location>
</feature>
<feature type="strand" evidence="4">
    <location>
        <begin position="80"/>
        <end position="88"/>
    </location>
</feature>
<feature type="helix" evidence="4">
    <location>
        <begin position="89"/>
        <end position="99"/>
    </location>
</feature>
<feature type="strand" evidence="4">
    <location>
        <begin position="103"/>
        <end position="108"/>
    </location>
</feature>
<feature type="strand" evidence="4">
    <location>
        <begin position="115"/>
        <end position="117"/>
    </location>
</feature>
<feature type="helix" evidence="4">
    <location>
        <begin position="124"/>
        <end position="126"/>
    </location>
</feature>
<feature type="strand" evidence="4">
    <location>
        <begin position="132"/>
        <end position="136"/>
    </location>
</feature>
<feature type="helix" evidence="4">
    <location>
        <begin position="139"/>
        <end position="151"/>
    </location>
</feature>
<feature type="helix" evidence="4">
    <location>
        <begin position="167"/>
        <end position="169"/>
    </location>
</feature>
<feature type="strand" evidence="4">
    <location>
        <begin position="170"/>
        <end position="172"/>
    </location>
</feature>
<feature type="strand" evidence="4">
    <location>
        <begin position="178"/>
        <end position="182"/>
    </location>
</feature>
<feature type="helix" evidence="4">
    <location>
        <begin position="184"/>
        <end position="186"/>
    </location>
</feature>
<feature type="helix" evidence="4">
    <location>
        <begin position="187"/>
        <end position="190"/>
    </location>
</feature>
<feature type="strand" evidence="4">
    <location>
        <begin position="196"/>
        <end position="201"/>
    </location>
</feature>
<feature type="helix" evidence="4">
    <location>
        <begin position="203"/>
        <end position="206"/>
    </location>
</feature>
<feature type="helix" evidence="4">
    <location>
        <begin position="207"/>
        <end position="209"/>
    </location>
</feature>
<feature type="helix" evidence="4">
    <location>
        <begin position="213"/>
        <end position="216"/>
    </location>
</feature>
<feature type="strand" evidence="4">
    <location>
        <begin position="218"/>
        <end position="220"/>
    </location>
</feature>
<feature type="strand" evidence="4">
    <location>
        <begin position="229"/>
        <end position="234"/>
    </location>
</feature>
<feature type="helix" evidence="4">
    <location>
        <begin position="235"/>
        <end position="237"/>
    </location>
</feature>
<feature type="helix" evidence="4">
    <location>
        <begin position="241"/>
        <end position="250"/>
    </location>
</feature>
<feature type="helix" evidence="4">
    <location>
        <begin position="253"/>
        <end position="262"/>
    </location>
</feature>
<feature type="turn" evidence="4">
    <location>
        <begin position="263"/>
        <end position="265"/>
    </location>
</feature>
<sequence>MAFKFKTFAAVGALIGSLALVGCGQDEKDPNHIKVGVIVGAEQQVAEVAQKVAKDKYGLDVELVTFNDYVLPNEALSKGDIDANAFQHKPYLDQQLKDRGYKLVAVGNTFVYPIAGYSKKIKSLDELQDGSQVAVPNDPTNLGRSLLLLQKVGLIKLKDGVGLLPTVLDVVENPKNLKIVELEAPQLPRSLDDAQIALAVINTTYASQIGLTPAKDGIFVEDKESPYVNLIVTREDNKDAENVKKFVQAYQSDEVYEAANKVFNGGAVKGW</sequence>
<keyword id="KW-0002">3D-structure</keyword>
<keyword id="KW-0029">Amino-acid transport</keyword>
<keyword id="KW-1003">Cell membrane</keyword>
<keyword id="KW-0449">Lipoprotein</keyword>
<keyword id="KW-0472">Membrane</keyword>
<keyword id="KW-0564">Palmitate</keyword>
<keyword id="KW-1185">Reference proteome</keyword>
<keyword id="KW-0732">Signal</keyword>
<keyword id="KW-0813">Transport</keyword>
<reference key="1">
    <citation type="submission" date="1993-04" db="EMBL/GenBank/DDBJ databases">
        <title>Nucleotide sequence of 5' flanking region of the ribosomal RNA gene (rrnH) in E. coli.</title>
        <authorList>
            <person name="Miyamoto K."/>
        </authorList>
    </citation>
    <scope>NUCLEOTIDE SEQUENCE [GENOMIC DNA]</scope>
    <source>
        <strain>K12</strain>
    </source>
</reference>
<reference key="2">
    <citation type="submission" date="1996-02" db="EMBL/GenBank/DDBJ databases">
        <title>Systematic sequencing of the Escherichia coli genome: analysis of the 4.0 - 6.0 min (189,987 - 281,416bp) region.</title>
        <authorList>
            <person name="Takemoto K."/>
            <person name="Mori H."/>
            <person name="Murayama N."/>
            <person name="Kataoka K."/>
            <person name="Yano M."/>
            <person name="Itoh T."/>
            <person name="Yamamoto Y."/>
            <person name="Inokuchi H."/>
            <person name="Miki T."/>
            <person name="Hatada E."/>
            <person name="Fukuda R."/>
            <person name="Ichihara S."/>
            <person name="Mizuno T."/>
            <person name="Makino K."/>
            <person name="Nakata A."/>
            <person name="Yura T."/>
            <person name="Sampei G."/>
            <person name="Mizobuchi K."/>
        </authorList>
    </citation>
    <scope>NUCLEOTIDE SEQUENCE [LARGE SCALE GENOMIC DNA]</scope>
    <source>
        <strain>K12 / W3110 / ATCC 27325 / DSM 5911</strain>
    </source>
</reference>
<reference key="3">
    <citation type="submission" date="1997-01" db="EMBL/GenBank/DDBJ databases">
        <title>Sequence of minutes 4-25 of Escherichia coli.</title>
        <authorList>
            <person name="Chung E."/>
            <person name="Allen E."/>
            <person name="Araujo R."/>
            <person name="Aparicio A.M."/>
            <person name="Davis K."/>
            <person name="Duncan M."/>
            <person name="Federspiel N."/>
            <person name="Hyman R."/>
            <person name="Kalman S."/>
            <person name="Komp C."/>
            <person name="Kurdi O."/>
            <person name="Lew H."/>
            <person name="Lin D."/>
            <person name="Namath A."/>
            <person name="Oefner P."/>
            <person name="Roberts D."/>
            <person name="Schramm S."/>
            <person name="Davis R.W."/>
        </authorList>
    </citation>
    <scope>NUCLEOTIDE SEQUENCE [LARGE SCALE GENOMIC DNA]</scope>
    <source>
        <strain>K12 / MG1655 / ATCC 47076</strain>
    </source>
</reference>
<reference key="4">
    <citation type="journal article" date="1997" name="Science">
        <title>The complete genome sequence of Escherichia coli K-12.</title>
        <authorList>
            <person name="Blattner F.R."/>
            <person name="Plunkett G. III"/>
            <person name="Bloch C.A."/>
            <person name="Perna N.T."/>
            <person name="Burland V."/>
            <person name="Riley M."/>
            <person name="Collado-Vides J."/>
            <person name="Glasner J.D."/>
            <person name="Rode C.K."/>
            <person name="Mayhew G.F."/>
            <person name="Gregor J."/>
            <person name="Davis N.W."/>
            <person name="Kirkpatrick H.A."/>
            <person name="Goeden M.A."/>
            <person name="Rose D.J."/>
            <person name="Mau B."/>
            <person name="Shao Y."/>
        </authorList>
    </citation>
    <scope>NUCLEOTIDE SEQUENCE [LARGE SCALE GENOMIC DNA]</scope>
    <source>
        <strain>K12 / MG1655 / ATCC 47076</strain>
    </source>
</reference>
<reference key="5">
    <citation type="journal article" date="2006" name="Mol. Syst. Biol.">
        <title>Highly accurate genome sequences of Escherichia coli K-12 strains MG1655 and W3110.</title>
        <authorList>
            <person name="Hayashi K."/>
            <person name="Morooka N."/>
            <person name="Yamamoto Y."/>
            <person name="Fujita K."/>
            <person name="Isono K."/>
            <person name="Choi S."/>
            <person name="Ohtsubo E."/>
            <person name="Baba T."/>
            <person name="Wanner B.L."/>
            <person name="Mori H."/>
            <person name="Horiuchi T."/>
        </authorList>
    </citation>
    <scope>NUCLEOTIDE SEQUENCE [LARGE SCALE GENOMIC DNA]</scope>
    <source>
        <strain>K12 / W3110 / ATCC 27325 / DSM 5911</strain>
    </source>
</reference>
<reference key="6">
    <citation type="journal article" date="1992" name="J. Bacteriol.">
        <title>Identification, cloning, and characterization of rcsF, a new regulator gene for exopolysaccharide synthesis that suppresses the division mutation ftsZ84 in Escherichia coli K-12.</title>
        <authorList>
            <person name="Gervais F.G."/>
            <person name="Drapeau G.R."/>
        </authorList>
    </citation>
    <scope>NUCLEOTIDE SEQUENCE [GENOMIC DNA] OF 127-271</scope>
    <source>
        <strain>K12</strain>
    </source>
</reference>
<reference key="7">
    <citation type="journal article" date="2002" name="J. Bacteriol.">
        <title>The metD D-methionine transporter locus of Escherichia coli is an ABC transporter gene cluster.</title>
        <authorList>
            <person name="Gal J."/>
            <person name="Szvetnik A."/>
            <person name="Schnell R."/>
            <person name="Kalman M."/>
        </authorList>
    </citation>
    <scope>FUNCTION</scope>
    <source>
        <strain>K12 / MG1655 / ATCC 47076</strain>
    </source>
</reference>
<organism>
    <name type="scientific">Escherichia coli (strain K12)</name>
    <dbReference type="NCBI Taxonomy" id="83333"/>
    <lineage>
        <taxon>Bacteria</taxon>
        <taxon>Pseudomonadati</taxon>
        <taxon>Pseudomonadota</taxon>
        <taxon>Gammaproteobacteria</taxon>
        <taxon>Enterobacterales</taxon>
        <taxon>Enterobacteriaceae</taxon>
        <taxon>Escherichia</taxon>
    </lineage>
</organism>
<proteinExistence type="evidence at protein level"/>
<dbReference type="EMBL" id="D15061">
    <property type="protein sequence ID" value="BAA03657.1"/>
    <property type="molecule type" value="Genomic_DNA"/>
</dbReference>
<dbReference type="EMBL" id="U70214">
    <property type="protein sequence ID" value="AAB08625.1"/>
    <property type="molecule type" value="Genomic_DNA"/>
</dbReference>
<dbReference type="EMBL" id="U00096">
    <property type="protein sequence ID" value="AAC73308.1"/>
    <property type="molecule type" value="Genomic_DNA"/>
</dbReference>
<dbReference type="EMBL" id="AP009048">
    <property type="protein sequence ID" value="BAA77874.1"/>
    <property type="molecule type" value="Genomic_DNA"/>
</dbReference>
<dbReference type="EMBL" id="L04474">
    <property type="protein sequence ID" value="AAA24507.1"/>
    <property type="status" value="ALT_FRAME"/>
    <property type="molecule type" value="Genomic_DNA"/>
</dbReference>
<dbReference type="PIR" id="E64744">
    <property type="entry name" value="E64744"/>
</dbReference>
<dbReference type="RefSeq" id="NP_414739.1">
    <property type="nucleotide sequence ID" value="NC_000913.3"/>
</dbReference>
<dbReference type="RefSeq" id="WP_000874226.1">
    <property type="nucleotide sequence ID" value="NZ_SSZK01000004.1"/>
</dbReference>
<dbReference type="PDB" id="4YAH">
    <property type="method" value="X-ray"/>
    <property type="resolution" value="1.60 A"/>
    <property type="chains" value="X=1-271"/>
</dbReference>
<dbReference type="PDB" id="6CVL">
    <property type="method" value="X-ray"/>
    <property type="resolution" value="2.95 A"/>
    <property type="chains" value="E=34-259"/>
</dbReference>
<dbReference type="PDBsum" id="4YAH"/>
<dbReference type="PDBsum" id="6CVL"/>
<dbReference type="SMR" id="P28635"/>
<dbReference type="BioGRID" id="4263377">
    <property type="interactions" value="26"/>
</dbReference>
<dbReference type="BioGRID" id="849293">
    <property type="interactions" value="1"/>
</dbReference>
<dbReference type="ComplexPortal" id="CPX-2114">
    <property type="entry name" value="Methionine ABC transporter complex"/>
</dbReference>
<dbReference type="DIP" id="DIP-11196N"/>
<dbReference type="FunCoup" id="P28635">
    <property type="interactions" value="221"/>
</dbReference>
<dbReference type="IntAct" id="P28635">
    <property type="interactions" value="10"/>
</dbReference>
<dbReference type="STRING" id="511145.b0197"/>
<dbReference type="TCDB" id="3.A.1.24.1">
    <property type="family name" value="the atp-binding cassette (abc) superfamily"/>
</dbReference>
<dbReference type="jPOST" id="P28635"/>
<dbReference type="PaxDb" id="511145-b0197"/>
<dbReference type="EnsemblBacteria" id="AAC73308">
    <property type="protein sequence ID" value="AAC73308"/>
    <property type="gene ID" value="b0197"/>
</dbReference>
<dbReference type="GeneID" id="86862708"/>
<dbReference type="GeneID" id="944893"/>
<dbReference type="KEGG" id="ecj:JW0193"/>
<dbReference type="KEGG" id="eco:b0197"/>
<dbReference type="KEGG" id="ecoc:C3026_00915"/>
<dbReference type="PATRIC" id="fig|1411691.4.peg.2081"/>
<dbReference type="EchoBASE" id="EB1467"/>
<dbReference type="eggNOG" id="COG1464">
    <property type="taxonomic scope" value="Bacteria"/>
</dbReference>
<dbReference type="HOGENOM" id="CLU_067080_0_0_6"/>
<dbReference type="InParanoid" id="P28635"/>
<dbReference type="OMA" id="DHKITRE"/>
<dbReference type="OrthoDB" id="9812878at2"/>
<dbReference type="PhylomeDB" id="P28635"/>
<dbReference type="BioCyc" id="EcoCyc:METQ-MONOMER"/>
<dbReference type="BioCyc" id="MetaCyc:METQ-MONOMER"/>
<dbReference type="EvolutionaryTrace" id="P28635"/>
<dbReference type="PRO" id="PR:P28635"/>
<dbReference type="Proteomes" id="UP000000625">
    <property type="component" value="Chromosome"/>
</dbReference>
<dbReference type="GO" id="GO:0055052">
    <property type="term" value="C:ATP-binding cassette (ABC) transporter complex, substrate-binding subunit-containing"/>
    <property type="evidence" value="ECO:0000314"/>
    <property type="project" value="EcoCyc"/>
</dbReference>
<dbReference type="GO" id="GO:0016020">
    <property type="term" value="C:membrane"/>
    <property type="evidence" value="ECO:0000314"/>
    <property type="project" value="ComplexPortal"/>
</dbReference>
<dbReference type="GO" id="GO:1990197">
    <property type="term" value="C:methionine-importing ABC transporter complex"/>
    <property type="evidence" value="ECO:0000353"/>
    <property type="project" value="ComplexPortal"/>
</dbReference>
<dbReference type="GO" id="GO:0030288">
    <property type="term" value="C:outer membrane-bounded periplasmic space"/>
    <property type="evidence" value="ECO:0000255"/>
    <property type="project" value="EcoCyc"/>
</dbReference>
<dbReference type="GO" id="GO:0005886">
    <property type="term" value="C:plasma membrane"/>
    <property type="evidence" value="ECO:0000318"/>
    <property type="project" value="GO_Central"/>
</dbReference>
<dbReference type="GO" id="GO:0048473">
    <property type="term" value="P:D-methionine transmembrane transport"/>
    <property type="evidence" value="ECO:0000315"/>
    <property type="project" value="CACAO"/>
</dbReference>
<dbReference type="GO" id="GO:1903692">
    <property type="term" value="P:methionine import across plasma membrane"/>
    <property type="evidence" value="ECO:0000314"/>
    <property type="project" value="ComplexPortal"/>
</dbReference>
<dbReference type="GO" id="GO:0015821">
    <property type="term" value="P:methionine transport"/>
    <property type="evidence" value="ECO:0000269"/>
    <property type="project" value="EcoCyc"/>
</dbReference>
<dbReference type="CDD" id="cd13598">
    <property type="entry name" value="PBP2_lipoprotein_IlpA_like"/>
    <property type="match status" value="1"/>
</dbReference>
<dbReference type="FunFam" id="3.40.190.10:FF:000016">
    <property type="entry name" value="Lipoprotein"/>
    <property type="match status" value="1"/>
</dbReference>
<dbReference type="Gene3D" id="3.40.190.10">
    <property type="entry name" value="Periplasmic binding protein-like II"/>
    <property type="match status" value="2"/>
</dbReference>
<dbReference type="InterPro" id="IPR004872">
    <property type="entry name" value="Lipoprotein_NlpA"/>
</dbReference>
<dbReference type="NCBIfam" id="TIGR00363">
    <property type="entry name" value="MetQ/NlpA family lipoprotein"/>
    <property type="match status" value="1"/>
</dbReference>
<dbReference type="NCBIfam" id="NF008285">
    <property type="entry name" value="PRK11063.1"/>
    <property type="match status" value="1"/>
</dbReference>
<dbReference type="PANTHER" id="PTHR30429">
    <property type="entry name" value="D-METHIONINE-BINDING LIPOPROTEIN METQ"/>
    <property type="match status" value="1"/>
</dbReference>
<dbReference type="PANTHER" id="PTHR30429:SF1">
    <property type="entry name" value="D-METHIONINE-BINDING LIPOPROTEIN METQ-RELATED"/>
    <property type="match status" value="1"/>
</dbReference>
<dbReference type="Pfam" id="PF03180">
    <property type="entry name" value="Lipoprotein_9"/>
    <property type="match status" value="1"/>
</dbReference>
<dbReference type="PIRSF" id="PIRSF002854">
    <property type="entry name" value="MetQ"/>
    <property type="match status" value="1"/>
</dbReference>
<dbReference type="SUPFAM" id="SSF53850">
    <property type="entry name" value="Periplasmic binding protein-like II"/>
    <property type="match status" value="1"/>
</dbReference>
<dbReference type="PROSITE" id="PS51257">
    <property type="entry name" value="PROKAR_LIPOPROTEIN"/>
    <property type="match status" value="1"/>
</dbReference>
<evidence type="ECO:0000255" key="1">
    <source>
        <dbReference type="PROSITE-ProRule" id="PRU00303"/>
    </source>
</evidence>
<evidence type="ECO:0000269" key="2">
    <source>
    </source>
</evidence>
<evidence type="ECO:0000305" key="3"/>
<evidence type="ECO:0007829" key="4">
    <source>
        <dbReference type="PDB" id="4YAH"/>
    </source>
</evidence>